<name>TRMD_POLNS</name>
<organism>
    <name type="scientific">Polynucleobacter necessarius subsp. necessarius (strain STIR1)</name>
    <dbReference type="NCBI Taxonomy" id="452638"/>
    <lineage>
        <taxon>Bacteria</taxon>
        <taxon>Pseudomonadati</taxon>
        <taxon>Pseudomonadota</taxon>
        <taxon>Betaproteobacteria</taxon>
        <taxon>Burkholderiales</taxon>
        <taxon>Burkholderiaceae</taxon>
        <taxon>Polynucleobacter</taxon>
    </lineage>
</organism>
<sequence>MRFDVVTLFPEMFSALTQWGITGRACEQFLASVHLWNPRDFCSDPRKTVDDRAYGGGPGMVMMVKPLEDTVAGIRASHEAAGIKSGPICLLAPQGERFSQKIATDILSYGNLSFICGRYEAVDQRFVDRNVDLQLSIGDFVLSGGEIPAMAMMDAVIRLIPGALGDGQSATQDSFMNGLLDYPHYTRPEIYENLSVPDVLLGGHHAKIVDWRRQKSLELTFRLRLDLIESARAKGLLTREDEQFLRSL</sequence>
<feature type="chain" id="PRO_1000130194" description="tRNA (guanine-N(1)-)-methyltransferase">
    <location>
        <begin position="1"/>
        <end position="248"/>
    </location>
</feature>
<feature type="binding site" evidence="1">
    <location>
        <position position="117"/>
    </location>
    <ligand>
        <name>S-adenosyl-L-methionine</name>
        <dbReference type="ChEBI" id="CHEBI:59789"/>
    </ligand>
</feature>
<feature type="binding site" evidence="1">
    <location>
        <begin position="137"/>
        <end position="142"/>
    </location>
    <ligand>
        <name>S-adenosyl-L-methionine</name>
        <dbReference type="ChEBI" id="CHEBI:59789"/>
    </ligand>
</feature>
<proteinExistence type="inferred from homology"/>
<accession>B1XVN1</accession>
<dbReference type="EC" id="2.1.1.228" evidence="1"/>
<dbReference type="EMBL" id="CP001010">
    <property type="protein sequence ID" value="ACB44408.1"/>
    <property type="molecule type" value="Genomic_DNA"/>
</dbReference>
<dbReference type="SMR" id="B1XVN1"/>
<dbReference type="STRING" id="452638.Pnec_1283"/>
<dbReference type="KEGG" id="pne:Pnec_1283"/>
<dbReference type="eggNOG" id="COG0336">
    <property type="taxonomic scope" value="Bacteria"/>
</dbReference>
<dbReference type="HOGENOM" id="CLU_047363_0_1_4"/>
<dbReference type="OrthoDB" id="9807416at2"/>
<dbReference type="GO" id="GO:0005829">
    <property type="term" value="C:cytosol"/>
    <property type="evidence" value="ECO:0007669"/>
    <property type="project" value="TreeGrafter"/>
</dbReference>
<dbReference type="GO" id="GO:0052906">
    <property type="term" value="F:tRNA (guanine(37)-N1)-methyltransferase activity"/>
    <property type="evidence" value="ECO:0007669"/>
    <property type="project" value="UniProtKB-UniRule"/>
</dbReference>
<dbReference type="GO" id="GO:0002939">
    <property type="term" value="P:tRNA N1-guanine methylation"/>
    <property type="evidence" value="ECO:0007669"/>
    <property type="project" value="TreeGrafter"/>
</dbReference>
<dbReference type="CDD" id="cd18080">
    <property type="entry name" value="TrmD-like"/>
    <property type="match status" value="1"/>
</dbReference>
<dbReference type="FunFam" id="3.40.1280.10:FF:000001">
    <property type="entry name" value="tRNA (guanine-N(1)-)-methyltransferase"/>
    <property type="match status" value="1"/>
</dbReference>
<dbReference type="Gene3D" id="3.40.1280.10">
    <property type="match status" value="1"/>
</dbReference>
<dbReference type="Gene3D" id="1.10.1270.20">
    <property type="entry name" value="tRNA(m1g37)methyltransferase, domain 2"/>
    <property type="match status" value="1"/>
</dbReference>
<dbReference type="HAMAP" id="MF_00605">
    <property type="entry name" value="TrmD"/>
    <property type="match status" value="1"/>
</dbReference>
<dbReference type="InterPro" id="IPR029028">
    <property type="entry name" value="Alpha/beta_knot_MTases"/>
</dbReference>
<dbReference type="InterPro" id="IPR023148">
    <property type="entry name" value="tRNA_m1G_MeTrfase_C_sf"/>
</dbReference>
<dbReference type="InterPro" id="IPR002649">
    <property type="entry name" value="tRNA_m1G_MeTrfase_TrmD"/>
</dbReference>
<dbReference type="InterPro" id="IPR029026">
    <property type="entry name" value="tRNA_m1G_MTases_N"/>
</dbReference>
<dbReference type="InterPro" id="IPR016009">
    <property type="entry name" value="tRNA_MeTrfase_TRMD/TRM10"/>
</dbReference>
<dbReference type="NCBIfam" id="NF000648">
    <property type="entry name" value="PRK00026.1"/>
    <property type="match status" value="1"/>
</dbReference>
<dbReference type="NCBIfam" id="TIGR00088">
    <property type="entry name" value="trmD"/>
    <property type="match status" value="1"/>
</dbReference>
<dbReference type="PANTHER" id="PTHR46417">
    <property type="entry name" value="TRNA (GUANINE-N(1)-)-METHYLTRANSFERASE"/>
    <property type="match status" value="1"/>
</dbReference>
<dbReference type="PANTHER" id="PTHR46417:SF1">
    <property type="entry name" value="TRNA (GUANINE-N(1)-)-METHYLTRANSFERASE"/>
    <property type="match status" value="1"/>
</dbReference>
<dbReference type="Pfam" id="PF01746">
    <property type="entry name" value="tRNA_m1G_MT"/>
    <property type="match status" value="1"/>
</dbReference>
<dbReference type="PIRSF" id="PIRSF000386">
    <property type="entry name" value="tRNA_mtase"/>
    <property type="match status" value="1"/>
</dbReference>
<dbReference type="SUPFAM" id="SSF75217">
    <property type="entry name" value="alpha/beta knot"/>
    <property type="match status" value="1"/>
</dbReference>
<gene>
    <name evidence="1" type="primary">trmD</name>
    <name type="ordered locus">Pnec_1283</name>
</gene>
<keyword id="KW-0963">Cytoplasm</keyword>
<keyword id="KW-0489">Methyltransferase</keyword>
<keyword id="KW-0949">S-adenosyl-L-methionine</keyword>
<keyword id="KW-0808">Transferase</keyword>
<keyword id="KW-0819">tRNA processing</keyword>
<comment type="function">
    <text evidence="1">Specifically methylates guanosine-37 in various tRNAs.</text>
</comment>
<comment type="catalytic activity">
    <reaction evidence="1">
        <text>guanosine(37) in tRNA + S-adenosyl-L-methionine = N(1)-methylguanosine(37) in tRNA + S-adenosyl-L-homocysteine + H(+)</text>
        <dbReference type="Rhea" id="RHEA:36899"/>
        <dbReference type="Rhea" id="RHEA-COMP:10145"/>
        <dbReference type="Rhea" id="RHEA-COMP:10147"/>
        <dbReference type="ChEBI" id="CHEBI:15378"/>
        <dbReference type="ChEBI" id="CHEBI:57856"/>
        <dbReference type="ChEBI" id="CHEBI:59789"/>
        <dbReference type="ChEBI" id="CHEBI:73542"/>
        <dbReference type="ChEBI" id="CHEBI:74269"/>
        <dbReference type="EC" id="2.1.1.228"/>
    </reaction>
</comment>
<comment type="subunit">
    <text evidence="1">Homodimer.</text>
</comment>
<comment type="subcellular location">
    <subcellularLocation>
        <location evidence="1">Cytoplasm</location>
    </subcellularLocation>
</comment>
<comment type="similarity">
    <text evidence="1">Belongs to the RNA methyltransferase TrmD family.</text>
</comment>
<protein>
    <recommendedName>
        <fullName evidence="1">tRNA (guanine-N(1)-)-methyltransferase</fullName>
        <ecNumber evidence="1">2.1.1.228</ecNumber>
    </recommendedName>
    <alternativeName>
        <fullName evidence="1">M1G-methyltransferase</fullName>
    </alternativeName>
    <alternativeName>
        <fullName evidence="1">tRNA [GM37] methyltransferase</fullName>
    </alternativeName>
</protein>
<evidence type="ECO:0000255" key="1">
    <source>
        <dbReference type="HAMAP-Rule" id="MF_00605"/>
    </source>
</evidence>
<reference key="1">
    <citation type="journal article" date="2013" name="Proc. Natl. Acad. Sci. U.S.A.">
        <title>Polynucleobacter necessarius, a model for genome reduction in both free-living and symbiotic bacteria.</title>
        <authorList>
            <person name="Boscaro V."/>
            <person name="Felletti M."/>
            <person name="Vannini C."/>
            <person name="Ackerman M.S."/>
            <person name="Chain P.S."/>
            <person name="Malfatti S."/>
            <person name="Vergez L.M."/>
            <person name="Shin M."/>
            <person name="Doak T.G."/>
            <person name="Lynch M."/>
            <person name="Petroni G."/>
        </authorList>
    </citation>
    <scope>NUCLEOTIDE SEQUENCE [LARGE SCALE GENOMIC DNA]</scope>
    <source>
        <strain>STIR1</strain>
    </source>
</reference>